<protein>
    <recommendedName>
        <fullName evidence="1">Glutamyl-tRNA(Gln) amidotransferase subunit A</fullName>
        <shortName evidence="1">Glu-ADT subunit A</shortName>
        <ecNumber evidence="1">6.3.5.7</ecNumber>
    </recommendedName>
</protein>
<accession>Q3SR31</accession>
<organism>
    <name type="scientific">Nitrobacter winogradskyi (strain ATCC 25391 / DSM 10237 / CIP 104748 / NCIMB 11846 / Nb-255)</name>
    <dbReference type="NCBI Taxonomy" id="323098"/>
    <lineage>
        <taxon>Bacteria</taxon>
        <taxon>Pseudomonadati</taxon>
        <taxon>Pseudomonadota</taxon>
        <taxon>Alphaproteobacteria</taxon>
        <taxon>Hyphomicrobiales</taxon>
        <taxon>Nitrobacteraceae</taxon>
        <taxon>Nitrobacter</taxon>
    </lineage>
</organism>
<sequence length="491" mass="52513">MTDLTSLTLAEARDGLARKSFTALELTDAHLAAMERARVLNAYVLETPERAREMARQADGRIAKSEGGPLNGLPLGVKDLFATEGTRTTACSRILGDFKPPYESTVTSQLWRDGAVMLGKLNNDEFAMGSSNETSCFGPVINPWRRQGSDVRLVPGGSSGGSASAVAAGICLGATATDTGGSIRQPAAFTGTVGLKPTYGRCSRWGTVAFASSLDQAGPIARTVRDAAILLRSMAGHDPKDTTSVDRAVPDYEAAVGRSVKGMKIGLPREYRLDGMPAEIEKLWSQGADWLKAAGAELVEVSLPHTKYALPAYYIVAPAEASSNLARYDGVRYGARADGSNIVEMYENTRAKGFGAEVRRRIMIGTYVLSAGYYDAYYLRAQKVRTLIKKDFEDCYEAGVDAILTPATPSAAFGIGEKTDSDPIEMYLNDIFTVTANMAGLPGIAVPAGRDAQGLPLGLQLIGRPFDEEAVISLGEVIEQAAGRFTPEVWW</sequence>
<name>GATA_NITWN</name>
<proteinExistence type="inferred from homology"/>
<gene>
    <name evidence="1" type="primary">gatA</name>
    <name type="ordered locus">Nwi_2001</name>
</gene>
<reference key="1">
    <citation type="journal article" date="2006" name="Appl. Environ. Microbiol.">
        <title>Genome sequence of the chemolithoautotrophic nitrite-oxidizing bacterium Nitrobacter winogradskyi Nb-255.</title>
        <authorList>
            <person name="Starkenburg S.R."/>
            <person name="Chain P.S.G."/>
            <person name="Sayavedra-Soto L.A."/>
            <person name="Hauser L."/>
            <person name="Land M.L."/>
            <person name="Larimer F.W."/>
            <person name="Malfatti S.A."/>
            <person name="Klotz M.G."/>
            <person name="Bottomley P.J."/>
            <person name="Arp D.J."/>
            <person name="Hickey W.J."/>
        </authorList>
    </citation>
    <scope>NUCLEOTIDE SEQUENCE [LARGE SCALE GENOMIC DNA]</scope>
    <source>
        <strain>ATCC 25391 / DSM 10237 / CIP 104748 / NCIMB 11846 / Nb-255</strain>
    </source>
</reference>
<feature type="chain" id="PRO_0000241124" description="Glutamyl-tRNA(Gln) amidotransferase subunit A">
    <location>
        <begin position="1"/>
        <end position="491"/>
    </location>
</feature>
<feature type="active site" description="Charge relay system" evidence="1">
    <location>
        <position position="78"/>
    </location>
</feature>
<feature type="active site" description="Charge relay system" evidence="1">
    <location>
        <position position="158"/>
    </location>
</feature>
<feature type="active site" description="Acyl-ester intermediate" evidence="1">
    <location>
        <position position="182"/>
    </location>
</feature>
<keyword id="KW-0067">ATP-binding</keyword>
<keyword id="KW-0436">Ligase</keyword>
<keyword id="KW-0547">Nucleotide-binding</keyword>
<keyword id="KW-0648">Protein biosynthesis</keyword>
<keyword id="KW-1185">Reference proteome</keyword>
<comment type="function">
    <text evidence="1">Allows the formation of correctly charged Gln-tRNA(Gln) through the transamidation of misacylated Glu-tRNA(Gln) in organisms which lack glutaminyl-tRNA synthetase. The reaction takes place in the presence of glutamine and ATP through an activated gamma-phospho-Glu-tRNA(Gln).</text>
</comment>
<comment type="catalytic activity">
    <reaction evidence="1">
        <text>L-glutamyl-tRNA(Gln) + L-glutamine + ATP + H2O = L-glutaminyl-tRNA(Gln) + L-glutamate + ADP + phosphate + H(+)</text>
        <dbReference type="Rhea" id="RHEA:17521"/>
        <dbReference type="Rhea" id="RHEA-COMP:9681"/>
        <dbReference type="Rhea" id="RHEA-COMP:9684"/>
        <dbReference type="ChEBI" id="CHEBI:15377"/>
        <dbReference type="ChEBI" id="CHEBI:15378"/>
        <dbReference type="ChEBI" id="CHEBI:29985"/>
        <dbReference type="ChEBI" id="CHEBI:30616"/>
        <dbReference type="ChEBI" id="CHEBI:43474"/>
        <dbReference type="ChEBI" id="CHEBI:58359"/>
        <dbReference type="ChEBI" id="CHEBI:78520"/>
        <dbReference type="ChEBI" id="CHEBI:78521"/>
        <dbReference type="ChEBI" id="CHEBI:456216"/>
        <dbReference type="EC" id="6.3.5.7"/>
    </reaction>
</comment>
<comment type="subunit">
    <text evidence="1">Heterotrimer of A, B and C subunits.</text>
</comment>
<comment type="similarity">
    <text evidence="1">Belongs to the amidase family. GatA subfamily.</text>
</comment>
<dbReference type="EC" id="6.3.5.7" evidence="1"/>
<dbReference type="EMBL" id="CP000115">
    <property type="protein sequence ID" value="ABA05260.1"/>
    <property type="molecule type" value="Genomic_DNA"/>
</dbReference>
<dbReference type="RefSeq" id="WP_011315246.1">
    <property type="nucleotide sequence ID" value="NC_007406.1"/>
</dbReference>
<dbReference type="SMR" id="Q3SR31"/>
<dbReference type="STRING" id="323098.Nwi_2001"/>
<dbReference type="KEGG" id="nwi:Nwi_2001"/>
<dbReference type="eggNOG" id="COG0154">
    <property type="taxonomic scope" value="Bacteria"/>
</dbReference>
<dbReference type="HOGENOM" id="CLU_009600_0_3_5"/>
<dbReference type="OrthoDB" id="9811471at2"/>
<dbReference type="Proteomes" id="UP000002531">
    <property type="component" value="Chromosome"/>
</dbReference>
<dbReference type="GO" id="GO:0030956">
    <property type="term" value="C:glutamyl-tRNA(Gln) amidotransferase complex"/>
    <property type="evidence" value="ECO:0007669"/>
    <property type="project" value="InterPro"/>
</dbReference>
<dbReference type="GO" id="GO:0005524">
    <property type="term" value="F:ATP binding"/>
    <property type="evidence" value="ECO:0007669"/>
    <property type="project" value="UniProtKB-KW"/>
</dbReference>
<dbReference type="GO" id="GO:0050567">
    <property type="term" value="F:glutaminyl-tRNA synthase (glutamine-hydrolyzing) activity"/>
    <property type="evidence" value="ECO:0007669"/>
    <property type="project" value="UniProtKB-UniRule"/>
</dbReference>
<dbReference type="GO" id="GO:0006412">
    <property type="term" value="P:translation"/>
    <property type="evidence" value="ECO:0007669"/>
    <property type="project" value="UniProtKB-UniRule"/>
</dbReference>
<dbReference type="Gene3D" id="3.90.1300.10">
    <property type="entry name" value="Amidase signature (AS) domain"/>
    <property type="match status" value="1"/>
</dbReference>
<dbReference type="HAMAP" id="MF_00120">
    <property type="entry name" value="GatA"/>
    <property type="match status" value="1"/>
</dbReference>
<dbReference type="InterPro" id="IPR000120">
    <property type="entry name" value="Amidase"/>
</dbReference>
<dbReference type="InterPro" id="IPR020556">
    <property type="entry name" value="Amidase_CS"/>
</dbReference>
<dbReference type="InterPro" id="IPR023631">
    <property type="entry name" value="Amidase_dom"/>
</dbReference>
<dbReference type="InterPro" id="IPR036928">
    <property type="entry name" value="AS_sf"/>
</dbReference>
<dbReference type="InterPro" id="IPR004412">
    <property type="entry name" value="GatA"/>
</dbReference>
<dbReference type="NCBIfam" id="TIGR00132">
    <property type="entry name" value="gatA"/>
    <property type="match status" value="1"/>
</dbReference>
<dbReference type="PANTHER" id="PTHR11895:SF151">
    <property type="entry name" value="GLUTAMYL-TRNA(GLN) AMIDOTRANSFERASE SUBUNIT A"/>
    <property type="match status" value="1"/>
</dbReference>
<dbReference type="PANTHER" id="PTHR11895">
    <property type="entry name" value="TRANSAMIDASE"/>
    <property type="match status" value="1"/>
</dbReference>
<dbReference type="Pfam" id="PF01425">
    <property type="entry name" value="Amidase"/>
    <property type="match status" value="1"/>
</dbReference>
<dbReference type="SUPFAM" id="SSF75304">
    <property type="entry name" value="Amidase signature (AS) enzymes"/>
    <property type="match status" value="1"/>
</dbReference>
<dbReference type="PROSITE" id="PS00571">
    <property type="entry name" value="AMIDASES"/>
    <property type="match status" value="1"/>
</dbReference>
<evidence type="ECO:0000255" key="1">
    <source>
        <dbReference type="HAMAP-Rule" id="MF_00120"/>
    </source>
</evidence>